<feature type="signal peptide" description="Tat-type signal" evidence="1">
    <location>
        <begin position="1"/>
        <end position="31"/>
    </location>
</feature>
<feature type="chain" id="PRO_1000186369" description="Periplasmic nitrate reductase" evidence="1">
    <location>
        <begin position="32"/>
        <end position="828"/>
    </location>
</feature>
<feature type="domain" description="4Fe-4S Mo/W bis-MGD-type" evidence="1">
    <location>
        <begin position="39"/>
        <end position="95"/>
    </location>
</feature>
<feature type="binding site" evidence="1">
    <location>
        <position position="46"/>
    </location>
    <ligand>
        <name>[4Fe-4S] cluster</name>
        <dbReference type="ChEBI" id="CHEBI:49883"/>
    </ligand>
</feature>
<feature type="binding site" evidence="1">
    <location>
        <position position="49"/>
    </location>
    <ligand>
        <name>[4Fe-4S] cluster</name>
        <dbReference type="ChEBI" id="CHEBI:49883"/>
    </ligand>
</feature>
<feature type="binding site" evidence="1">
    <location>
        <position position="53"/>
    </location>
    <ligand>
        <name>[4Fe-4S] cluster</name>
        <dbReference type="ChEBI" id="CHEBI:49883"/>
    </ligand>
</feature>
<feature type="binding site" evidence="1">
    <location>
        <position position="81"/>
    </location>
    <ligand>
        <name>[4Fe-4S] cluster</name>
        <dbReference type="ChEBI" id="CHEBI:49883"/>
    </ligand>
</feature>
<feature type="binding site" evidence="1">
    <location>
        <position position="83"/>
    </location>
    <ligand>
        <name>Mo-bis(molybdopterin guanine dinucleotide)</name>
        <dbReference type="ChEBI" id="CHEBI:60539"/>
    </ligand>
</feature>
<feature type="binding site" evidence="1">
    <location>
        <position position="150"/>
    </location>
    <ligand>
        <name>Mo-bis(molybdopterin guanine dinucleotide)</name>
        <dbReference type="ChEBI" id="CHEBI:60539"/>
    </ligand>
</feature>
<feature type="binding site" evidence="1">
    <location>
        <position position="175"/>
    </location>
    <ligand>
        <name>Mo-bis(molybdopterin guanine dinucleotide)</name>
        <dbReference type="ChEBI" id="CHEBI:60539"/>
    </ligand>
</feature>
<feature type="binding site" evidence="1">
    <location>
        <position position="179"/>
    </location>
    <ligand>
        <name>Mo-bis(molybdopterin guanine dinucleotide)</name>
        <dbReference type="ChEBI" id="CHEBI:60539"/>
    </ligand>
</feature>
<feature type="binding site" evidence="1">
    <location>
        <begin position="212"/>
        <end position="219"/>
    </location>
    <ligand>
        <name>Mo-bis(molybdopterin guanine dinucleotide)</name>
        <dbReference type="ChEBI" id="CHEBI:60539"/>
    </ligand>
</feature>
<feature type="binding site" evidence="1">
    <location>
        <begin position="243"/>
        <end position="247"/>
    </location>
    <ligand>
        <name>Mo-bis(molybdopterin guanine dinucleotide)</name>
        <dbReference type="ChEBI" id="CHEBI:60539"/>
    </ligand>
</feature>
<feature type="binding site" evidence="1">
    <location>
        <begin position="262"/>
        <end position="264"/>
    </location>
    <ligand>
        <name>Mo-bis(molybdopterin guanine dinucleotide)</name>
        <dbReference type="ChEBI" id="CHEBI:60539"/>
    </ligand>
</feature>
<feature type="binding site" evidence="1">
    <location>
        <position position="372"/>
    </location>
    <ligand>
        <name>Mo-bis(molybdopterin guanine dinucleotide)</name>
        <dbReference type="ChEBI" id="CHEBI:60539"/>
    </ligand>
</feature>
<feature type="binding site" evidence="1">
    <location>
        <position position="376"/>
    </location>
    <ligand>
        <name>Mo-bis(molybdopterin guanine dinucleotide)</name>
        <dbReference type="ChEBI" id="CHEBI:60539"/>
    </ligand>
</feature>
<feature type="binding site" evidence="1">
    <location>
        <position position="482"/>
    </location>
    <ligand>
        <name>Mo-bis(molybdopterin guanine dinucleotide)</name>
        <dbReference type="ChEBI" id="CHEBI:60539"/>
    </ligand>
</feature>
<feature type="binding site" evidence="1">
    <location>
        <begin position="508"/>
        <end position="509"/>
    </location>
    <ligand>
        <name>Mo-bis(molybdopterin guanine dinucleotide)</name>
        <dbReference type="ChEBI" id="CHEBI:60539"/>
    </ligand>
</feature>
<feature type="binding site" evidence="1">
    <location>
        <position position="531"/>
    </location>
    <ligand>
        <name>Mo-bis(molybdopterin guanine dinucleotide)</name>
        <dbReference type="ChEBI" id="CHEBI:60539"/>
    </ligand>
</feature>
<feature type="binding site" evidence="1">
    <location>
        <position position="558"/>
    </location>
    <ligand>
        <name>Mo-bis(molybdopterin guanine dinucleotide)</name>
        <dbReference type="ChEBI" id="CHEBI:60539"/>
    </ligand>
</feature>
<feature type="binding site" evidence="1">
    <location>
        <begin position="718"/>
        <end position="727"/>
    </location>
    <ligand>
        <name>Mo-bis(molybdopterin guanine dinucleotide)</name>
        <dbReference type="ChEBI" id="CHEBI:60539"/>
    </ligand>
</feature>
<feature type="binding site" evidence="1">
    <location>
        <position position="794"/>
    </location>
    <ligand>
        <name>substrate</name>
    </ligand>
</feature>
<feature type="binding site" evidence="1">
    <location>
        <position position="802"/>
    </location>
    <ligand>
        <name>Mo-bis(molybdopterin guanine dinucleotide)</name>
        <dbReference type="ChEBI" id="CHEBI:60539"/>
    </ligand>
</feature>
<feature type="binding site" evidence="1">
    <location>
        <position position="819"/>
    </location>
    <ligand>
        <name>Mo-bis(molybdopterin guanine dinucleotide)</name>
        <dbReference type="ChEBI" id="CHEBI:60539"/>
    </ligand>
</feature>
<gene>
    <name evidence="1" type="primary">napA</name>
    <name type="ordered locus">SeAg_B2394</name>
</gene>
<organism>
    <name type="scientific">Salmonella agona (strain SL483)</name>
    <dbReference type="NCBI Taxonomy" id="454166"/>
    <lineage>
        <taxon>Bacteria</taxon>
        <taxon>Pseudomonadati</taxon>
        <taxon>Pseudomonadota</taxon>
        <taxon>Gammaproteobacteria</taxon>
        <taxon>Enterobacterales</taxon>
        <taxon>Enterobacteriaceae</taxon>
        <taxon>Salmonella</taxon>
    </lineage>
</organism>
<keyword id="KW-0004">4Fe-4S</keyword>
<keyword id="KW-0249">Electron transport</keyword>
<keyword id="KW-0408">Iron</keyword>
<keyword id="KW-0411">Iron-sulfur</keyword>
<keyword id="KW-0479">Metal-binding</keyword>
<keyword id="KW-0500">Molybdenum</keyword>
<keyword id="KW-0534">Nitrate assimilation</keyword>
<keyword id="KW-0560">Oxidoreductase</keyword>
<keyword id="KW-0574">Periplasm</keyword>
<keyword id="KW-0732">Signal</keyword>
<keyword id="KW-0813">Transport</keyword>
<accession>B5EYU5</accession>
<comment type="function">
    <text evidence="1">Catalytic subunit of the periplasmic nitrate reductase complex NapAB. Receives electrons from NapB and catalyzes the reduction of nitrate to nitrite.</text>
</comment>
<comment type="catalytic activity">
    <reaction evidence="1">
        <text>2 Fe(II)-[cytochrome] + nitrate + 2 H(+) = 2 Fe(III)-[cytochrome] + nitrite + H2O</text>
        <dbReference type="Rhea" id="RHEA:12909"/>
        <dbReference type="Rhea" id="RHEA-COMP:11777"/>
        <dbReference type="Rhea" id="RHEA-COMP:11778"/>
        <dbReference type="ChEBI" id="CHEBI:15377"/>
        <dbReference type="ChEBI" id="CHEBI:15378"/>
        <dbReference type="ChEBI" id="CHEBI:16301"/>
        <dbReference type="ChEBI" id="CHEBI:17632"/>
        <dbReference type="ChEBI" id="CHEBI:29033"/>
        <dbReference type="ChEBI" id="CHEBI:29034"/>
        <dbReference type="EC" id="1.9.6.1"/>
    </reaction>
</comment>
<comment type="cofactor">
    <cofactor evidence="1">
        <name>[4Fe-4S] cluster</name>
        <dbReference type="ChEBI" id="CHEBI:49883"/>
    </cofactor>
    <text evidence="1">Binds 1 [4Fe-4S] cluster.</text>
</comment>
<comment type="cofactor">
    <cofactor evidence="1">
        <name>Mo-bis(molybdopterin guanine dinucleotide)</name>
        <dbReference type="ChEBI" id="CHEBI:60539"/>
    </cofactor>
    <text evidence="1">Binds 1 molybdenum-bis(molybdopterin guanine dinucleotide) (Mo-bis-MGD) cofactor per subunit.</text>
</comment>
<comment type="subunit">
    <text evidence="1">Component of the periplasmic nitrate reductase NapAB complex composed of NapA and NapB.</text>
</comment>
<comment type="subcellular location">
    <subcellularLocation>
        <location evidence="1">Periplasm</location>
    </subcellularLocation>
</comment>
<comment type="PTM">
    <text evidence="1">Predicted to be exported by the Tat system. The position of the signal peptide cleavage has not been experimentally proven.</text>
</comment>
<comment type="similarity">
    <text evidence="1">Belongs to the prokaryotic molybdopterin-containing oxidoreductase family. NasA/NapA/NarB subfamily.</text>
</comment>
<name>NAPA_SALA4</name>
<protein>
    <recommendedName>
        <fullName evidence="1">Periplasmic nitrate reductase</fullName>
        <ecNumber evidence="1">1.9.6.1</ecNumber>
    </recommendedName>
</protein>
<dbReference type="EC" id="1.9.6.1" evidence="1"/>
<dbReference type="EMBL" id="CP001138">
    <property type="protein sequence ID" value="ACH49382.1"/>
    <property type="molecule type" value="Genomic_DNA"/>
</dbReference>
<dbReference type="RefSeq" id="WP_000778097.1">
    <property type="nucleotide sequence ID" value="NC_011149.1"/>
</dbReference>
<dbReference type="SMR" id="B5EYU5"/>
<dbReference type="KEGG" id="sea:SeAg_B2394"/>
<dbReference type="HOGENOM" id="CLU_000422_13_4_6"/>
<dbReference type="Proteomes" id="UP000008819">
    <property type="component" value="Chromosome"/>
</dbReference>
<dbReference type="GO" id="GO:0016020">
    <property type="term" value="C:membrane"/>
    <property type="evidence" value="ECO:0007669"/>
    <property type="project" value="TreeGrafter"/>
</dbReference>
<dbReference type="GO" id="GO:0009325">
    <property type="term" value="C:nitrate reductase complex"/>
    <property type="evidence" value="ECO:0007669"/>
    <property type="project" value="TreeGrafter"/>
</dbReference>
<dbReference type="GO" id="GO:0042597">
    <property type="term" value="C:periplasmic space"/>
    <property type="evidence" value="ECO:0007669"/>
    <property type="project" value="UniProtKB-SubCell"/>
</dbReference>
<dbReference type="GO" id="GO:0051539">
    <property type="term" value="F:4 iron, 4 sulfur cluster binding"/>
    <property type="evidence" value="ECO:0007669"/>
    <property type="project" value="UniProtKB-KW"/>
</dbReference>
<dbReference type="GO" id="GO:0009055">
    <property type="term" value="F:electron transfer activity"/>
    <property type="evidence" value="ECO:0007669"/>
    <property type="project" value="UniProtKB-UniRule"/>
</dbReference>
<dbReference type="GO" id="GO:0005506">
    <property type="term" value="F:iron ion binding"/>
    <property type="evidence" value="ECO:0007669"/>
    <property type="project" value="UniProtKB-UniRule"/>
</dbReference>
<dbReference type="GO" id="GO:0030151">
    <property type="term" value="F:molybdenum ion binding"/>
    <property type="evidence" value="ECO:0007669"/>
    <property type="project" value="InterPro"/>
</dbReference>
<dbReference type="GO" id="GO:0043546">
    <property type="term" value="F:molybdopterin cofactor binding"/>
    <property type="evidence" value="ECO:0007669"/>
    <property type="project" value="InterPro"/>
</dbReference>
<dbReference type="GO" id="GO:0050140">
    <property type="term" value="F:nitrate reductase (cytochrome) activity"/>
    <property type="evidence" value="ECO:0007669"/>
    <property type="project" value="UniProtKB-EC"/>
</dbReference>
<dbReference type="GO" id="GO:0045333">
    <property type="term" value="P:cellular respiration"/>
    <property type="evidence" value="ECO:0007669"/>
    <property type="project" value="UniProtKB-ARBA"/>
</dbReference>
<dbReference type="GO" id="GO:0006777">
    <property type="term" value="P:Mo-molybdopterin cofactor biosynthetic process"/>
    <property type="evidence" value="ECO:0007669"/>
    <property type="project" value="UniProtKB-UniRule"/>
</dbReference>
<dbReference type="GO" id="GO:0042128">
    <property type="term" value="P:nitrate assimilation"/>
    <property type="evidence" value="ECO:0007669"/>
    <property type="project" value="UniProtKB-UniRule"/>
</dbReference>
<dbReference type="CDD" id="cd02791">
    <property type="entry name" value="MopB_CT_Nitrate-R-NapA-like"/>
    <property type="match status" value="1"/>
</dbReference>
<dbReference type="CDD" id="cd02754">
    <property type="entry name" value="MopB_Nitrate-R-NapA-like"/>
    <property type="match status" value="1"/>
</dbReference>
<dbReference type="FunFam" id="2.40.40.20:FF:000005">
    <property type="entry name" value="Periplasmic nitrate reductase"/>
    <property type="match status" value="1"/>
</dbReference>
<dbReference type="FunFam" id="3.40.228.10:FF:000001">
    <property type="entry name" value="Periplasmic nitrate reductase"/>
    <property type="match status" value="1"/>
</dbReference>
<dbReference type="Gene3D" id="2.40.40.20">
    <property type="match status" value="1"/>
</dbReference>
<dbReference type="Gene3D" id="3.30.200.210">
    <property type="match status" value="1"/>
</dbReference>
<dbReference type="Gene3D" id="3.40.50.740">
    <property type="match status" value="1"/>
</dbReference>
<dbReference type="Gene3D" id="3.40.228.10">
    <property type="entry name" value="Dimethylsulfoxide Reductase, domain 2"/>
    <property type="match status" value="1"/>
</dbReference>
<dbReference type="HAMAP" id="MF_01630">
    <property type="entry name" value="Nitrate_reduct_NapA"/>
    <property type="match status" value="1"/>
</dbReference>
<dbReference type="InterPro" id="IPR009010">
    <property type="entry name" value="Asp_de-COase-like_dom_sf"/>
</dbReference>
<dbReference type="InterPro" id="IPR041957">
    <property type="entry name" value="CT_Nitrate-R-NapA-like"/>
</dbReference>
<dbReference type="InterPro" id="IPR006657">
    <property type="entry name" value="MoPterin_dinucl-bd_dom"/>
</dbReference>
<dbReference type="InterPro" id="IPR006656">
    <property type="entry name" value="Mopterin_OxRdtase"/>
</dbReference>
<dbReference type="InterPro" id="IPR006963">
    <property type="entry name" value="Mopterin_OxRdtase_4Fe-4S_dom"/>
</dbReference>
<dbReference type="InterPro" id="IPR027467">
    <property type="entry name" value="MopterinOxRdtase_cofactor_BS"/>
</dbReference>
<dbReference type="InterPro" id="IPR010051">
    <property type="entry name" value="Periplasm_NO3_reductase_lsu"/>
</dbReference>
<dbReference type="InterPro" id="IPR050123">
    <property type="entry name" value="Prok_molybdopt-oxidoreductase"/>
</dbReference>
<dbReference type="InterPro" id="IPR006311">
    <property type="entry name" value="TAT_signal"/>
</dbReference>
<dbReference type="InterPro" id="IPR019546">
    <property type="entry name" value="TAT_signal_bac_arc"/>
</dbReference>
<dbReference type="NCBIfam" id="TIGR01706">
    <property type="entry name" value="NAPA"/>
    <property type="match status" value="1"/>
</dbReference>
<dbReference type="NCBIfam" id="NF010055">
    <property type="entry name" value="PRK13532.1"/>
    <property type="match status" value="1"/>
</dbReference>
<dbReference type="NCBIfam" id="TIGR01409">
    <property type="entry name" value="TAT_signal_seq"/>
    <property type="match status" value="1"/>
</dbReference>
<dbReference type="PANTHER" id="PTHR43105:SF11">
    <property type="entry name" value="PERIPLASMIC NITRATE REDUCTASE"/>
    <property type="match status" value="1"/>
</dbReference>
<dbReference type="PANTHER" id="PTHR43105">
    <property type="entry name" value="RESPIRATORY NITRATE REDUCTASE"/>
    <property type="match status" value="1"/>
</dbReference>
<dbReference type="Pfam" id="PF04879">
    <property type="entry name" value="Molybdop_Fe4S4"/>
    <property type="match status" value="1"/>
</dbReference>
<dbReference type="Pfam" id="PF00384">
    <property type="entry name" value="Molybdopterin"/>
    <property type="match status" value="1"/>
</dbReference>
<dbReference type="Pfam" id="PF01568">
    <property type="entry name" value="Molydop_binding"/>
    <property type="match status" value="1"/>
</dbReference>
<dbReference type="SMART" id="SM00926">
    <property type="entry name" value="Molybdop_Fe4S4"/>
    <property type="match status" value="1"/>
</dbReference>
<dbReference type="SUPFAM" id="SSF50692">
    <property type="entry name" value="ADC-like"/>
    <property type="match status" value="1"/>
</dbReference>
<dbReference type="SUPFAM" id="SSF53706">
    <property type="entry name" value="Formate dehydrogenase/DMSO reductase, domains 1-3"/>
    <property type="match status" value="1"/>
</dbReference>
<dbReference type="PROSITE" id="PS51669">
    <property type="entry name" value="4FE4S_MOW_BIS_MGD"/>
    <property type="match status" value="1"/>
</dbReference>
<dbReference type="PROSITE" id="PS00551">
    <property type="entry name" value="MOLYBDOPTERIN_PROK_1"/>
    <property type="match status" value="1"/>
</dbReference>
<dbReference type="PROSITE" id="PS51318">
    <property type="entry name" value="TAT"/>
    <property type="match status" value="1"/>
</dbReference>
<proteinExistence type="inferred from homology"/>
<evidence type="ECO:0000255" key="1">
    <source>
        <dbReference type="HAMAP-Rule" id="MF_01630"/>
    </source>
</evidence>
<sequence>MKLSRRSFMKANAVAAAAAAAGLSVPGVARAVVGQQEAIKWDKAPCRFCGTGCGVLVGTQQGRVVACQGDPDAPVNRGLNCIKGYFLPKIMYGKDRLTQPMLRMKDGSYHKDGEFTPVSWEQAFDVMEEKFKTSLKEKGPEAIGMFGSGQWTIWEGYAAAKLFKAGFRSNNIDPNARHCMASAVVGFMRTFGMDEPMGCYDDIEQADAFVLWGSNMAEMHPILWSRITNRRLSDPNVKVAVLSTFQHRSFELADNGIVFTPQSDLVILNYIANYIIQNNAVNQDFFTKHVNLRKGATDIGYGLRPTHPLEKAAKNPGSDASEPMSFDEYKAFVAEYTLDKTAEMTGVPKDQLEQLAQLYADPNKRVISYWTMGFNQHTRGVWANNLVYNLHLLTGKISQPGCGPFSLTGQPSACGTAREVGTFSHRLPADMVVTNEKHRDICEKHWQIPAGTIPAKVGLHAVAQDRALKDGKLNVYWVMCNNNMQAGPNINEDRMPGWRDPRNFIIVSDPYPTVSALSADLILPTAMWVEKEGAYGNAERRTQFWRQQIKAPGEAKSDLWQLVQFSRRFKTEEVWPEALLAQKPELRGKTLYDVLFATPAVSKFPLSELKEDQLNDESRELGFYLQKGLFEEYAWFGRGHGHDLAPFDDYHNARGLRWPVVEGKETQWRYSEGNDPYVKAGEGYKFYGKPDGKAVIFALPFEPAAESPDNEYDLWLSTGRVLEHWHTGSMTRRVPELHRAFPEAVVFIHPLDAKARDLRRGDKVKVSSRRGEVISIVETRGRNRPPQGLVYMPFFDAAQLVNNLTLDATDPLSKETDFKKCAVKLAKV</sequence>
<reference key="1">
    <citation type="journal article" date="2011" name="J. Bacteriol.">
        <title>Comparative genomics of 28 Salmonella enterica isolates: evidence for CRISPR-mediated adaptive sublineage evolution.</title>
        <authorList>
            <person name="Fricke W.F."/>
            <person name="Mammel M.K."/>
            <person name="McDermott P.F."/>
            <person name="Tartera C."/>
            <person name="White D.G."/>
            <person name="Leclerc J.E."/>
            <person name="Ravel J."/>
            <person name="Cebula T.A."/>
        </authorList>
    </citation>
    <scope>NUCLEOTIDE SEQUENCE [LARGE SCALE GENOMIC DNA]</scope>
    <source>
        <strain>SL483</strain>
    </source>
</reference>